<accession>Q2YSS2</accession>
<keyword id="KW-0010">Activator</keyword>
<keyword id="KW-0046">Antibiotic resistance</keyword>
<keyword id="KW-0963">Cytoplasm</keyword>
<keyword id="KW-0238">DNA-binding</keyword>
<keyword id="KW-0597">Phosphoprotein</keyword>
<keyword id="KW-0678">Repressor</keyword>
<keyword id="KW-0804">Transcription</keyword>
<keyword id="KW-0805">Transcription regulation</keyword>
<keyword id="KW-0902">Two-component regulatory system</keyword>
<keyword id="KW-0843">Virulence</keyword>
<proteinExistence type="inferred from homology"/>
<feature type="chain" id="PRO_0000347895" description="Response regulator protein GraR">
    <location>
        <begin position="1"/>
        <end position="224"/>
    </location>
</feature>
<feature type="domain" description="Response regulatory" evidence="4">
    <location>
        <begin position="2"/>
        <end position="115"/>
    </location>
</feature>
<feature type="DNA-binding region" description="OmpR/PhoB-type" evidence="5">
    <location>
        <begin position="126"/>
        <end position="224"/>
    </location>
</feature>
<feature type="modified residue" description="4-aspartylphosphate" evidence="4">
    <location>
        <position position="51"/>
    </location>
</feature>
<feature type="modified residue" description="Phosphothreonine" evidence="3">
    <location>
        <position position="128"/>
    </location>
</feature>
<feature type="modified residue" description="Phosphothreonine" evidence="3">
    <location>
        <position position="130"/>
    </location>
</feature>
<feature type="modified residue" description="Phosphothreonine" evidence="3">
    <location>
        <position position="149"/>
    </location>
</feature>
<gene>
    <name type="primary">graR</name>
    <name type="ordered locus">SAB0608</name>
</gene>
<reference key="1">
    <citation type="journal article" date="2007" name="PLoS ONE">
        <title>Molecular correlates of host specialization in Staphylococcus aureus.</title>
        <authorList>
            <person name="Herron-Olson L."/>
            <person name="Fitzgerald J.R."/>
            <person name="Musser J.M."/>
            <person name="Kapur V."/>
        </authorList>
    </citation>
    <scope>NUCLEOTIDE SEQUENCE [LARGE SCALE GENOMIC DNA]</scope>
    <source>
        <strain>bovine RF122 / ET3-1</strain>
    </source>
</reference>
<evidence type="ECO:0000250" key="1"/>
<evidence type="ECO:0000250" key="2">
    <source>
        <dbReference type="UniProtKB" id="Q2G0D9"/>
    </source>
</evidence>
<evidence type="ECO:0000250" key="3">
    <source>
        <dbReference type="UniProtKB" id="Q2G0E0"/>
    </source>
</evidence>
<evidence type="ECO:0000255" key="4">
    <source>
        <dbReference type="PROSITE-ProRule" id="PRU00169"/>
    </source>
</evidence>
<evidence type="ECO:0000255" key="5">
    <source>
        <dbReference type="PROSITE-ProRule" id="PRU01091"/>
    </source>
</evidence>
<name>GRAR_STAAB</name>
<dbReference type="EMBL" id="AJ938182">
    <property type="protein sequence ID" value="CAI80296.1"/>
    <property type="molecule type" value="Genomic_DNA"/>
</dbReference>
<dbReference type="RefSeq" id="WP_001166496.1">
    <property type="nucleotide sequence ID" value="NC_007622.1"/>
</dbReference>
<dbReference type="SMR" id="Q2YSS2"/>
<dbReference type="KEGG" id="sab:SAB0608"/>
<dbReference type="HOGENOM" id="CLU_000445_30_3_9"/>
<dbReference type="GO" id="GO:0005829">
    <property type="term" value="C:cytosol"/>
    <property type="evidence" value="ECO:0007669"/>
    <property type="project" value="TreeGrafter"/>
</dbReference>
<dbReference type="GO" id="GO:0032993">
    <property type="term" value="C:protein-DNA complex"/>
    <property type="evidence" value="ECO:0007669"/>
    <property type="project" value="TreeGrafter"/>
</dbReference>
<dbReference type="GO" id="GO:0000156">
    <property type="term" value="F:phosphorelay response regulator activity"/>
    <property type="evidence" value="ECO:0007669"/>
    <property type="project" value="TreeGrafter"/>
</dbReference>
<dbReference type="GO" id="GO:0000976">
    <property type="term" value="F:transcription cis-regulatory region binding"/>
    <property type="evidence" value="ECO:0007669"/>
    <property type="project" value="TreeGrafter"/>
</dbReference>
<dbReference type="GO" id="GO:0006355">
    <property type="term" value="P:regulation of DNA-templated transcription"/>
    <property type="evidence" value="ECO:0007669"/>
    <property type="project" value="InterPro"/>
</dbReference>
<dbReference type="GO" id="GO:0046677">
    <property type="term" value="P:response to antibiotic"/>
    <property type="evidence" value="ECO:0007669"/>
    <property type="project" value="UniProtKB-KW"/>
</dbReference>
<dbReference type="CDD" id="cd18159">
    <property type="entry name" value="REC_OmpR_NsrR-like"/>
    <property type="match status" value="1"/>
</dbReference>
<dbReference type="CDD" id="cd00383">
    <property type="entry name" value="trans_reg_C"/>
    <property type="match status" value="1"/>
</dbReference>
<dbReference type="FunFam" id="3.40.50.2300:FF:000232">
    <property type="entry name" value="Response regulator GraR"/>
    <property type="match status" value="1"/>
</dbReference>
<dbReference type="FunFam" id="1.10.10.10:FF:000546">
    <property type="entry name" value="Two-component response regulator GraR"/>
    <property type="match status" value="1"/>
</dbReference>
<dbReference type="Gene3D" id="3.40.50.2300">
    <property type="match status" value="1"/>
</dbReference>
<dbReference type="Gene3D" id="1.10.10.10">
    <property type="entry name" value="Winged helix-like DNA-binding domain superfamily/Winged helix DNA-binding domain"/>
    <property type="match status" value="1"/>
</dbReference>
<dbReference type="InterPro" id="IPR011006">
    <property type="entry name" value="CheY-like_superfamily"/>
</dbReference>
<dbReference type="InterPro" id="IPR001867">
    <property type="entry name" value="OmpR/PhoB-type_DNA-bd"/>
</dbReference>
<dbReference type="InterPro" id="IPR016032">
    <property type="entry name" value="Sig_transdc_resp-reg_C-effctor"/>
</dbReference>
<dbReference type="InterPro" id="IPR001789">
    <property type="entry name" value="Sig_transdc_resp-reg_receiver"/>
</dbReference>
<dbReference type="InterPro" id="IPR039420">
    <property type="entry name" value="WalR-like"/>
</dbReference>
<dbReference type="InterPro" id="IPR036388">
    <property type="entry name" value="WH-like_DNA-bd_sf"/>
</dbReference>
<dbReference type="PANTHER" id="PTHR48111">
    <property type="entry name" value="REGULATOR OF RPOS"/>
    <property type="match status" value="1"/>
</dbReference>
<dbReference type="PANTHER" id="PTHR48111:SF27">
    <property type="entry name" value="SENSORY TRANSDUCTION PROTEIN BCER"/>
    <property type="match status" value="1"/>
</dbReference>
<dbReference type="Pfam" id="PF00072">
    <property type="entry name" value="Response_reg"/>
    <property type="match status" value="1"/>
</dbReference>
<dbReference type="Pfam" id="PF00486">
    <property type="entry name" value="Trans_reg_C"/>
    <property type="match status" value="1"/>
</dbReference>
<dbReference type="SMART" id="SM00448">
    <property type="entry name" value="REC"/>
    <property type="match status" value="1"/>
</dbReference>
<dbReference type="SMART" id="SM00862">
    <property type="entry name" value="Trans_reg_C"/>
    <property type="match status" value="1"/>
</dbReference>
<dbReference type="SUPFAM" id="SSF46894">
    <property type="entry name" value="C-terminal effector domain of the bipartite response regulators"/>
    <property type="match status" value="1"/>
</dbReference>
<dbReference type="SUPFAM" id="SSF52172">
    <property type="entry name" value="CheY-like"/>
    <property type="match status" value="1"/>
</dbReference>
<dbReference type="PROSITE" id="PS51755">
    <property type="entry name" value="OMPR_PHOB"/>
    <property type="match status" value="1"/>
</dbReference>
<dbReference type="PROSITE" id="PS50110">
    <property type="entry name" value="RESPONSE_REGULATORY"/>
    <property type="match status" value="1"/>
</dbReference>
<comment type="function">
    <text evidence="3">Member of the two-component regulatory system GraR/GraS involved in resistance against cationic antimicrobial peptides (CAMPs). Upon phosphorylation by GraS, functions as a transcription regulator by direct binding to promoter regions of target genes such as adhesins, exoproteins, transporters, toxins, and proteins involved in cell wall synthesis. Down-regulates the expression of many genes involved in RNA and amino acid synthesis or glycolysis.</text>
</comment>
<comment type="subunit">
    <text evidence="2">Interacts with GraX.</text>
</comment>
<comment type="subcellular location">
    <subcellularLocation>
        <location evidence="1">Cytoplasm</location>
    </subcellularLocation>
</comment>
<comment type="PTM">
    <text evidence="3">Phosphorylated by GraS. Phosphorylated by Stk1; phosphorylation increases the DNA-binding activity of GraR.</text>
</comment>
<protein>
    <recommendedName>
        <fullName>Response regulator protein GraR</fullName>
    </recommendedName>
    <alternativeName>
        <fullName>Glycopeptide resistance-associated protein R</fullName>
    </alternativeName>
</protein>
<organism>
    <name type="scientific">Staphylococcus aureus (strain bovine RF122 / ET3-1)</name>
    <dbReference type="NCBI Taxonomy" id="273036"/>
    <lineage>
        <taxon>Bacteria</taxon>
        <taxon>Bacillati</taxon>
        <taxon>Bacillota</taxon>
        <taxon>Bacilli</taxon>
        <taxon>Bacillales</taxon>
        <taxon>Staphylococcaceae</taxon>
        <taxon>Staphylococcus</taxon>
    </lineage>
</organism>
<sequence length="224" mass="26094">MQILLVEDDNTLFQELKKELEQWDFNVAGIEDFGKVMDTFESFNPEIVILDVQLPKYDGFYWCRKMREVSNVPILFLSSRDNPMDQVMSMELGADDYMQKPFYTNVLIAKLQAIYRRVYEFTAEEKRTLTWQDAIIDLSKDSIQKGDDTIFLSKTEMIILEILITKKNQIVSRDTIITALWDDEAFVSDNTLTVNVNRLRKKLSEISMDSAIETKVGKGYMAHE</sequence>